<reference key="1">
    <citation type="journal article" date="2006" name="J. Bacteriol.">
        <title>The genome sequence of Methanosphaera stadtmanae reveals why this human intestinal archaeon is restricted to methanol and H2 for methane formation and ATP synthesis.</title>
        <authorList>
            <person name="Fricke W.F."/>
            <person name="Seedorf H."/>
            <person name="Henne A."/>
            <person name="Kruer M."/>
            <person name="Liesegang H."/>
            <person name="Hedderich R."/>
            <person name="Gottschalk G."/>
            <person name="Thauer R.K."/>
        </authorList>
    </citation>
    <scope>NUCLEOTIDE SEQUENCE [LARGE SCALE GENOMIC DNA]</scope>
    <source>
        <strain>ATCC 43021 / DSM 3091 / JCM 11832 / MCB-3</strain>
    </source>
</reference>
<evidence type="ECO:0000255" key="1">
    <source>
        <dbReference type="HAMAP-Rule" id="MF_01014"/>
    </source>
</evidence>
<name>HIS4_METST</name>
<proteinExistence type="inferred from homology"/>
<keyword id="KW-0028">Amino-acid biosynthesis</keyword>
<keyword id="KW-0963">Cytoplasm</keyword>
<keyword id="KW-0368">Histidine biosynthesis</keyword>
<keyword id="KW-0413">Isomerase</keyword>
<keyword id="KW-1185">Reference proteome</keyword>
<gene>
    <name evidence="1" type="primary">hisA</name>
    <name type="ordered locus">Msp_0389</name>
</gene>
<feature type="chain" id="PRO_0000290577" description="1-(5-phosphoribosyl)-5-[(5-phosphoribosylamino)methylideneamino] imidazole-4-carboxamide isomerase">
    <location>
        <begin position="1"/>
        <end position="237"/>
    </location>
</feature>
<feature type="active site" description="Proton acceptor" evidence="1">
    <location>
        <position position="8"/>
    </location>
</feature>
<feature type="active site" description="Proton donor" evidence="1">
    <location>
        <position position="129"/>
    </location>
</feature>
<organism>
    <name type="scientific">Methanosphaera stadtmanae (strain ATCC 43021 / DSM 3091 / JCM 11832 / MCB-3)</name>
    <dbReference type="NCBI Taxonomy" id="339860"/>
    <lineage>
        <taxon>Archaea</taxon>
        <taxon>Methanobacteriati</taxon>
        <taxon>Methanobacteriota</taxon>
        <taxon>Methanomada group</taxon>
        <taxon>Methanobacteria</taxon>
        <taxon>Methanobacteriales</taxon>
        <taxon>Methanobacteriaceae</taxon>
        <taxon>Methanosphaera</taxon>
    </lineage>
</organism>
<comment type="catalytic activity">
    <reaction evidence="1">
        <text>1-(5-phospho-beta-D-ribosyl)-5-[(5-phospho-beta-D-ribosylamino)methylideneamino]imidazole-4-carboxamide = 5-[(5-phospho-1-deoxy-D-ribulos-1-ylimino)methylamino]-1-(5-phospho-beta-D-ribosyl)imidazole-4-carboxamide</text>
        <dbReference type="Rhea" id="RHEA:15469"/>
        <dbReference type="ChEBI" id="CHEBI:58435"/>
        <dbReference type="ChEBI" id="CHEBI:58525"/>
        <dbReference type="EC" id="5.3.1.16"/>
    </reaction>
</comment>
<comment type="pathway">
    <text evidence="1">Amino-acid biosynthesis; L-histidine biosynthesis; L-histidine from 5-phospho-alpha-D-ribose 1-diphosphate: step 4/9.</text>
</comment>
<comment type="subcellular location">
    <subcellularLocation>
        <location evidence="1">Cytoplasm</location>
    </subcellularLocation>
</comment>
<comment type="similarity">
    <text evidence="1">Belongs to the HisA/HisF family.</text>
</comment>
<sequence>MIIIPAVDIKNGKCVQLVQGEPGTEQVVIENPAEVAKQWEQKGAKKLHIVDLDGALGSGRNLSIVKEIIEKTKSPIQLGGGIRSVSDAKKLLEIGVNTVIIGTMAIKNPEIIKELSSEYGCERICVSLDSKNNKVVTHGWKESTDKTPIEYAKLFEKMGAGSILFTNVDVEGLLNGINLEPIKELLNNVSIPIIYSGGITSVDDLKVLSDIGVDYVVIGSALYKGLITLEDALKYQK</sequence>
<protein>
    <recommendedName>
        <fullName evidence="1">1-(5-phosphoribosyl)-5-[(5-phosphoribosylamino)methylideneamino] imidazole-4-carboxamide isomerase</fullName>
        <ecNumber evidence="1">5.3.1.16</ecNumber>
    </recommendedName>
    <alternativeName>
        <fullName evidence="1">Phosphoribosylformimino-5-aminoimidazole carboxamide ribotide isomerase</fullName>
    </alternativeName>
</protein>
<accession>Q2NHB3</accession>
<dbReference type="EC" id="5.3.1.16" evidence="1"/>
<dbReference type="EMBL" id="CP000102">
    <property type="protein sequence ID" value="ABC56790.1"/>
    <property type="molecule type" value="Genomic_DNA"/>
</dbReference>
<dbReference type="RefSeq" id="WP_011405990.1">
    <property type="nucleotide sequence ID" value="NC_007681.1"/>
</dbReference>
<dbReference type="SMR" id="Q2NHB3"/>
<dbReference type="STRING" id="339860.Msp_0389"/>
<dbReference type="GeneID" id="41324963"/>
<dbReference type="KEGG" id="mst:Msp_0389"/>
<dbReference type="eggNOG" id="arCOG00618">
    <property type="taxonomic scope" value="Archaea"/>
</dbReference>
<dbReference type="HOGENOM" id="CLU_048577_1_1_2"/>
<dbReference type="OrthoDB" id="52866at2157"/>
<dbReference type="UniPathway" id="UPA00031">
    <property type="reaction ID" value="UER00009"/>
</dbReference>
<dbReference type="Proteomes" id="UP000001931">
    <property type="component" value="Chromosome"/>
</dbReference>
<dbReference type="GO" id="GO:0005737">
    <property type="term" value="C:cytoplasm"/>
    <property type="evidence" value="ECO:0007669"/>
    <property type="project" value="UniProtKB-SubCell"/>
</dbReference>
<dbReference type="GO" id="GO:0003949">
    <property type="term" value="F:1-(5-phosphoribosyl)-5-[(5-phosphoribosylamino)methylideneamino]imidazole-4-carboxamide isomerase activity"/>
    <property type="evidence" value="ECO:0007669"/>
    <property type="project" value="UniProtKB-UniRule"/>
</dbReference>
<dbReference type="GO" id="GO:0000105">
    <property type="term" value="P:L-histidine biosynthetic process"/>
    <property type="evidence" value="ECO:0007669"/>
    <property type="project" value="UniProtKB-UniRule"/>
</dbReference>
<dbReference type="GO" id="GO:0000162">
    <property type="term" value="P:L-tryptophan biosynthetic process"/>
    <property type="evidence" value="ECO:0007669"/>
    <property type="project" value="TreeGrafter"/>
</dbReference>
<dbReference type="CDD" id="cd04732">
    <property type="entry name" value="HisA"/>
    <property type="match status" value="1"/>
</dbReference>
<dbReference type="FunFam" id="3.20.20.70:FF:000009">
    <property type="entry name" value="1-(5-phosphoribosyl)-5-[(5-phosphoribosylamino)methylideneamino] imidazole-4-carboxamide isomerase"/>
    <property type="match status" value="1"/>
</dbReference>
<dbReference type="Gene3D" id="3.20.20.70">
    <property type="entry name" value="Aldolase class I"/>
    <property type="match status" value="1"/>
</dbReference>
<dbReference type="HAMAP" id="MF_01014">
    <property type="entry name" value="HisA"/>
    <property type="match status" value="1"/>
</dbReference>
<dbReference type="InterPro" id="IPR013785">
    <property type="entry name" value="Aldolase_TIM"/>
</dbReference>
<dbReference type="InterPro" id="IPR006062">
    <property type="entry name" value="His_biosynth"/>
</dbReference>
<dbReference type="InterPro" id="IPR006063">
    <property type="entry name" value="HisA_bact_arch"/>
</dbReference>
<dbReference type="InterPro" id="IPR044524">
    <property type="entry name" value="Isoase_HisA-like"/>
</dbReference>
<dbReference type="InterPro" id="IPR023016">
    <property type="entry name" value="Isoase_HisA-like_bact"/>
</dbReference>
<dbReference type="InterPro" id="IPR011060">
    <property type="entry name" value="RibuloseP-bd_barrel"/>
</dbReference>
<dbReference type="NCBIfam" id="TIGR00007">
    <property type="entry name" value="1-(5-phosphoribosyl)-5-[(5-phosphoribosylamino)methylideneamino]imidazole-4-carboxamide isomerase"/>
    <property type="match status" value="1"/>
</dbReference>
<dbReference type="NCBIfam" id="NF010112">
    <property type="entry name" value="PRK13585.1"/>
    <property type="match status" value="1"/>
</dbReference>
<dbReference type="PANTHER" id="PTHR43090">
    <property type="entry name" value="1-(5-PHOSPHORIBOSYL)-5-[(5-PHOSPHORIBOSYLAMINO)METHYLIDENEAMINO] IMIDAZOLE-4-CARBOXAMIDE ISOMERASE"/>
    <property type="match status" value="1"/>
</dbReference>
<dbReference type="PANTHER" id="PTHR43090:SF7">
    <property type="entry name" value="1-(5-PHOSPHORIBOSYL)-5-[(5-PHOSPHORIBOSYLAMINO)METHYLIDENEAMINO] IMIDAZOLE-4-CARBOXAMIDE ISOMERASE"/>
    <property type="match status" value="1"/>
</dbReference>
<dbReference type="Pfam" id="PF00977">
    <property type="entry name" value="His_biosynth"/>
    <property type="match status" value="1"/>
</dbReference>
<dbReference type="SUPFAM" id="SSF51366">
    <property type="entry name" value="Ribulose-phoshate binding barrel"/>
    <property type="match status" value="1"/>
</dbReference>